<feature type="chain" id="PRO_0000128728" description="Probable malate:quinone oxidoreductase">
    <location>
        <begin position="1"/>
        <end position="497"/>
    </location>
</feature>
<comment type="catalytic activity">
    <reaction evidence="1">
        <text>(S)-malate + a quinone = a quinol + oxaloacetate</text>
        <dbReference type="Rhea" id="RHEA:46012"/>
        <dbReference type="ChEBI" id="CHEBI:15589"/>
        <dbReference type="ChEBI" id="CHEBI:16452"/>
        <dbReference type="ChEBI" id="CHEBI:24646"/>
        <dbReference type="ChEBI" id="CHEBI:132124"/>
        <dbReference type="EC" id="1.1.5.4"/>
    </reaction>
</comment>
<comment type="cofactor">
    <cofactor evidence="1">
        <name>FAD</name>
        <dbReference type="ChEBI" id="CHEBI:57692"/>
    </cofactor>
</comment>
<comment type="pathway">
    <text evidence="1">Carbohydrate metabolism; tricarboxylic acid cycle; oxaloacetate from (S)-malate (quinone route): step 1/1.</text>
</comment>
<comment type="similarity">
    <text evidence="1">Belongs to the MQO family.</text>
</comment>
<comment type="sequence caution" evidence="2">
    <conflict type="erroneous initiation">
        <sequence resource="EMBL-CDS" id="CAE18878"/>
    </conflict>
</comment>
<name>MQO_PROMP</name>
<gene>
    <name evidence="1" type="primary">mqo</name>
    <name type="ordered locus">PMM0419</name>
</gene>
<sequence>MTSKNILNKNNCYDAILVGAGIMSGTLALLITEILPTIKILIIEKLNKPGSESTGAFNNAGTGHAANCELNYTPVDENGDLQIDKALFINRSFENSMSLWASLYSKGKIDIKKFLKFIPHISFVTGTENISFLKKRFKAMSKYPEFADMEFSSSFNQIKSWAPLITTCRDPLDKVAATRIKRGTDINFQALTREYLTYISKNKNVEIFYNTELIDLKKTDKKQWKLKVRSLGKIVSLNTSYVFLGAGGKTINFLQKSKIPEAKIYGGFPVSGKWLICEEKSLTEKHNAKVYGKADIGSPPMSVPHLDTRWIEGKKFLLYGPFAGFTTKFLKKGSYLDLFSSIKKSNLFSMLDVGIKNNELINYLFSQSFKSHNSRVENLRNMMPSAEPSNWYLENAGQRVQIIKKTKDGGSLQFGTEIVNSGDGSLSALLGASPGASTAVSIMIEVLKKSCLFNADKFELEKKLSNLLYESEIKNESDNNFLEIIKKRNNSILGFHP</sequence>
<evidence type="ECO:0000255" key="1">
    <source>
        <dbReference type="HAMAP-Rule" id="MF_00212"/>
    </source>
</evidence>
<evidence type="ECO:0000305" key="2"/>
<reference key="1">
    <citation type="journal article" date="2003" name="Nature">
        <title>Genome divergence in two Prochlorococcus ecotypes reflects oceanic niche differentiation.</title>
        <authorList>
            <person name="Rocap G."/>
            <person name="Larimer F.W."/>
            <person name="Lamerdin J.E."/>
            <person name="Malfatti S."/>
            <person name="Chain P."/>
            <person name="Ahlgren N.A."/>
            <person name="Arellano A."/>
            <person name="Coleman M."/>
            <person name="Hauser L."/>
            <person name="Hess W.R."/>
            <person name="Johnson Z.I."/>
            <person name="Land M.L."/>
            <person name="Lindell D."/>
            <person name="Post A.F."/>
            <person name="Regala W."/>
            <person name="Shah M."/>
            <person name="Shaw S.L."/>
            <person name="Steglich C."/>
            <person name="Sullivan M.B."/>
            <person name="Ting C.S."/>
            <person name="Tolonen A."/>
            <person name="Webb E.A."/>
            <person name="Zinser E.R."/>
            <person name="Chisholm S.W."/>
        </authorList>
    </citation>
    <scope>NUCLEOTIDE SEQUENCE [LARGE SCALE GENOMIC DNA]</scope>
    <source>
        <strain>CCMP1986 / NIES-2087 / MED4</strain>
    </source>
</reference>
<keyword id="KW-0274">FAD</keyword>
<keyword id="KW-0285">Flavoprotein</keyword>
<keyword id="KW-0560">Oxidoreductase</keyword>
<keyword id="KW-0816">Tricarboxylic acid cycle</keyword>
<organism>
    <name type="scientific">Prochlorococcus marinus subsp. pastoris (strain CCMP1986 / NIES-2087 / MED4)</name>
    <dbReference type="NCBI Taxonomy" id="59919"/>
    <lineage>
        <taxon>Bacteria</taxon>
        <taxon>Bacillati</taxon>
        <taxon>Cyanobacteriota</taxon>
        <taxon>Cyanophyceae</taxon>
        <taxon>Synechococcales</taxon>
        <taxon>Prochlorococcaceae</taxon>
        <taxon>Prochlorococcus</taxon>
    </lineage>
</organism>
<proteinExistence type="inferred from homology"/>
<protein>
    <recommendedName>
        <fullName evidence="1">Probable malate:quinone oxidoreductase</fullName>
        <ecNumber evidence="1">1.1.5.4</ecNumber>
    </recommendedName>
    <alternativeName>
        <fullName evidence="1">MQO</fullName>
    </alternativeName>
    <alternativeName>
        <fullName evidence="1">Malate dehydrogenase [quinone]</fullName>
    </alternativeName>
</protein>
<accession>Q7V2Q2</accession>
<dbReference type="EC" id="1.1.5.4" evidence="1"/>
<dbReference type="EMBL" id="BX548174">
    <property type="protein sequence ID" value="CAE18878.1"/>
    <property type="status" value="ALT_INIT"/>
    <property type="molecule type" value="Genomic_DNA"/>
</dbReference>
<dbReference type="RefSeq" id="WP_011132055.1">
    <property type="nucleotide sequence ID" value="NC_005072.1"/>
</dbReference>
<dbReference type="SMR" id="Q7V2Q2"/>
<dbReference type="STRING" id="59919.PMM0419"/>
<dbReference type="KEGG" id="pmm:PMM0419"/>
<dbReference type="eggNOG" id="COG0579">
    <property type="taxonomic scope" value="Bacteria"/>
</dbReference>
<dbReference type="HOGENOM" id="CLU_028151_0_0_3"/>
<dbReference type="OrthoDB" id="9763983at2"/>
<dbReference type="UniPathway" id="UPA00223">
    <property type="reaction ID" value="UER01008"/>
</dbReference>
<dbReference type="Proteomes" id="UP000001026">
    <property type="component" value="Chromosome"/>
</dbReference>
<dbReference type="GO" id="GO:0047545">
    <property type="term" value="F:2-hydroxyglutarate dehydrogenase activity"/>
    <property type="evidence" value="ECO:0007669"/>
    <property type="project" value="TreeGrafter"/>
</dbReference>
<dbReference type="GO" id="GO:0008924">
    <property type="term" value="F:L-malate dehydrogenase (quinone) activity"/>
    <property type="evidence" value="ECO:0007669"/>
    <property type="project" value="UniProtKB-UniRule"/>
</dbReference>
<dbReference type="GO" id="GO:0006099">
    <property type="term" value="P:tricarboxylic acid cycle"/>
    <property type="evidence" value="ECO:0007669"/>
    <property type="project" value="UniProtKB-UniRule"/>
</dbReference>
<dbReference type="HAMAP" id="MF_00212">
    <property type="entry name" value="MQO"/>
    <property type="match status" value="1"/>
</dbReference>
<dbReference type="InterPro" id="IPR036188">
    <property type="entry name" value="FAD/NAD-bd_sf"/>
</dbReference>
<dbReference type="InterPro" id="IPR006231">
    <property type="entry name" value="MQO"/>
</dbReference>
<dbReference type="NCBIfam" id="TIGR01320">
    <property type="entry name" value="mal_quin_oxido"/>
    <property type="match status" value="1"/>
</dbReference>
<dbReference type="NCBIfam" id="NF003606">
    <property type="entry name" value="PRK05257.2-1"/>
    <property type="match status" value="1"/>
</dbReference>
<dbReference type="NCBIfam" id="NF003607">
    <property type="entry name" value="PRK05257.2-3"/>
    <property type="match status" value="1"/>
</dbReference>
<dbReference type="NCBIfam" id="NF003611">
    <property type="entry name" value="PRK05257.3-2"/>
    <property type="match status" value="1"/>
</dbReference>
<dbReference type="PANTHER" id="PTHR43104">
    <property type="entry name" value="L-2-HYDROXYGLUTARATE DEHYDROGENASE, MITOCHONDRIAL"/>
    <property type="match status" value="1"/>
</dbReference>
<dbReference type="PANTHER" id="PTHR43104:SF2">
    <property type="entry name" value="L-2-HYDROXYGLUTARATE DEHYDROGENASE, MITOCHONDRIAL"/>
    <property type="match status" value="1"/>
</dbReference>
<dbReference type="Pfam" id="PF06039">
    <property type="entry name" value="Mqo"/>
    <property type="match status" value="1"/>
</dbReference>
<dbReference type="SUPFAM" id="SSF51905">
    <property type="entry name" value="FAD/NAD(P)-binding domain"/>
    <property type="match status" value="1"/>
</dbReference>